<keyword id="KW-0143">Chaperone</keyword>
<keyword id="KW-0479">Metal-binding</keyword>
<keyword id="KW-0496">Mitochondrion</keyword>
<keyword id="KW-1185">Reference proteome</keyword>
<keyword id="KW-0809">Transit peptide</keyword>
<keyword id="KW-0862">Zinc</keyword>
<keyword id="KW-0863">Zinc-finger</keyword>
<proteinExistence type="evidence at transcript level"/>
<evidence type="ECO:0000250" key="1"/>
<evidence type="ECO:0000255" key="2"/>
<evidence type="ECO:0000255" key="3">
    <source>
        <dbReference type="PROSITE-ProRule" id="PRU00834"/>
    </source>
</evidence>
<evidence type="ECO:0000256" key="4">
    <source>
        <dbReference type="SAM" id="MobiDB-lite"/>
    </source>
</evidence>
<name>DNLZ_XENLA</name>
<feature type="transit peptide" description="Mitochondrion" evidence="2">
    <location>
        <begin position="1"/>
        <end position="68"/>
    </location>
</feature>
<feature type="chain" id="PRO_0000317168" description="DNL-type zinc finger protein">
    <location>
        <begin position="69"/>
        <end position="188"/>
    </location>
</feature>
<feature type="zinc finger region" description="DNL-type" evidence="3">
    <location>
        <begin position="77"/>
        <end position="174"/>
    </location>
</feature>
<feature type="region of interest" description="Disordered" evidence="4">
    <location>
        <begin position="169"/>
        <end position="188"/>
    </location>
</feature>
<feature type="binding site" evidence="3">
    <location>
        <position position="88"/>
    </location>
    <ligand>
        <name>Zn(2+)</name>
        <dbReference type="ChEBI" id="CHEBI:29105"/>
    </ligand>
</feature>
<feature type="binding site" evidence="3">
    <location>
        <position position="91"/>
    </location>
    <ligand>
        <name>Zn(2+)</name>
        <dbReference type="ChEBI" id="CHEBI:29105"/>
    </ligand>
</feature>
<feature type="binding site" evidence="3">
    <location>
        <position position="113"/>
    </location>
    <ligand>
        <name>Zn(2+)</name>
        <dbReference type="ChEBI" id="CHEBI:29105"/>
    </ligand>
</feature>
<feature type="binding site" evidence="3">
    <location>
        <position position="116"/>
    </location>
    <ligand>
        <name>Zn(2+)</name>
        <dbReference type="ChEBI" id="CHEBI:29105"/>
    </ligand>
</feature>
<protein>
    <recommendedName>
        <fullName>DNL-type zinc finger protein</fullName>
    </recommendedName>
    <alternativeName>
        <fullName>mtHsp70-escort protein</fullName>
    </alternativeName>
</protein>
<dbReference type="EMBL" id="BC123327">
    <property type="protein sequence ID" value="AAI23328.1"/>
    <property type="molecule type" value="mRNA"/>
</dbReference>
<dbReference type="RefSeq" id="NP_001090392.1">
    <property type="nucleotide sequence ID" value="NM_001096923.1"/>
</dbReference>
<dbReference type="SMR" id="Q0IH40"/>
<dbReference type="DNASU" id="779303"/>
<dbReference type="GeneID" id="779303"/>
<dbReference type="KEGG" id="xla:779303"/>
<dbReference type="AGR" id="Xenbase:XB-GENE-940252"/>
<dbReference type="CTD" id="779303"/>
<dbReference type="Xenbase" id="XB-GENE-940252">
    <property type="gene designation" value="dnlz.S"/>
</dbReference>
<dbReference type="OMA" id="GAYHKGV"/>
<dbReference type="OrthoDB" id="512667at2759"/>
<dbReference type="Proteomes" id="UP000186698">
    <property type="component" value="Chromosome 8S"/>
</dbReference>
<dbReference type="Bgee" id="779303">
    <property type="expression patterns" value="Expressed in oocyte and 19 other cell types or tissues"/>
</dbReference>
<dbReference type="GO" id="GO:0005739">
    <property type="term" value="C:mitochondrion"/>
    <property type="evidence" value="ECO:0000318"/>
    <property type="project" value="GO_Central"/>
</dbReference>
<dbReference type="GO" id="GO:0051087">
    <property type="term" value="F:protein-folding chaperone binding"/>
    <property type="evidence" value="ECO:0000318"/>
    <property type="project" value="GO_Central"/>
</dbReference>
<dbReference type="GO" id="GO:0008270">
    <property type="term" value="F:zinc ion binding"/>
    <property type="evidence" value="ECO:0007669"/>
    <property type="project" value="UniProtKB-KW"/>
</dbReference>
<dbReference type="GO" id="GO:0006457">
    <property type="term" value="P:protein folding"/>
    <property type="evidence" value="ECO:0000318"/>
    <property type="project" value="GO_Central"/>
</dbReference>
<dbReference type="GO" id="GO:0030150">
    <property type="term" value="P:protein import into mitochondrial matrix"/>
    <property type="evidence" value="ECO:0000318"/>
    <property type="project" value="GO_Central"/>
</dbReference>
<dbReference type="GO" id="GO:0050821">
    <property type="term" value="P:protein stabilization"/>
    <property type="evidence" value="ECO:0000318"/>
    <property type="project" value="GO_Central"/>
</dbReference>
<dbReference type="InterPro" id="IPR024158">
    <property type="entry name" value="Mt_import_TIM15"/>
</dbReference>
<dbReference type="InterPro" id="IPR007853">
    <property type="entry name" value="Znf_DNL-typ"/>
</dbReference>
<dbReference type="PANTHER" id="PTHR20922">
    <property type="entry name" value="DNL-TYPE ZINC FINGER PROTEIN"/>
    <property type="match status" value="1"/>
</dbReference>
<dbReference type="PANTHER" id="PTHR20922:SF13">
    <property type="entry name" value="DNL-TYPE ZINC FINGER PROTEIN"/>
    <property type="match status" value="1"/>
</dbReference>
<dbReference type="Pfam" id="PF05180">
    <property type="entry name" value="zf-DNL"/>
    <property type="match status" value="1"/>
</dbReference>
<dbReference type="PROSITE" id="PS51501">
    <property type="entry name" value="ZF_DNL"/>
    <property type="match status" value="1"/>
</dbReference>
<organism>
    <name type="scientific">Xenopus laevis</name>
    <name type="common">African clawed frog</name>
    <dbReference type="NCBI Taxonomy" id="8355"/>
    <lineage>
        <taxon>Eukaryota</taxon>
        <taxon>Metazoa</taxon>
        <taxon>Chordata</taxon>
        <taxon>Craniata</taxon>
        <taxon>Vertebrata</taxon>
        <taxon>Euteleostomi</taxon>
        <taxon>Amphibia</taxon>
        <taxon>Batrachia</taxon>
        <taxon>Anura</taxon>
        <taxon>Pipoidea</taxon>
        <taxon>Pipidae</taxon>
        <taxon>Xenopodinae</taxon>
        <taxon>Xenopus</taxon>
        <taxon>Xenopus</taxon>
    </lineage>
</organism>
<comment type="function">
    <text evidence="1">May function as a co-chaperone towards HSPA9/mortalin which, by itself, is prone to self-aggregation.</text>
</comment>
<comment type="subcellular location">
    <subcellularLocation>
        <location evidence="1">Mitochondrion</location>
    </subcellularLocation>
</comment>
<reference key="1">
    <citation type="submission" date="2006-09" db="EMBL/GenBank/DDBJ databases">
        <authorList>
            <consortium name="NIH - Xenopus Gene Collection (XGC) project"/>
        </authorList>
    </citation>
    <scope>NUCLEOTIDE SEQUENCE [LARGE SCALE MRNA]</scope>
    <source>
        <tissue>Ovary</tissue>
    </source>
</reference>
<sequence length="188" mass="20286">MLFQSCGLLSALGRIGSRSPVTRGILARAAVVWARDVDGNWGAPTVSRLVTGHLHKCVRPPWTVPLAGRLYCTLPAAPSSHYRLIYTCKVCATRSSKTISKVAYHKGVVIVRCPGCENHHIIADNLGWFSDLEGRRNIEEILAAKGEQVQRLVGDDAVEILLRNAGESATQDGDKTGEAESAGNKLLS</sequence>
<accession>Q0IH40</accession>
<gene>
    <name type="primary">dnlz</name>
</gene>